<accession>Q9CE02</accession>
<dbReference type="EMBL" id="AE005176">
    <property type="protein sequence ID" value="AAK06146.1"/>
    <property type="molecule type" value="Genomic_DNA"/>
</dbReference>
<dbReference type="PIR" id="H86880">
    <property type="entry name" value="H86880"/>
</dbReference>
<dbReference type="RefSeq" id="NP_268205.1">
    <property type="nucleotide sequence ID" value="NC_002662.1"/>
</dbReference>
<dbReference type="RefSeq" id="WP_010906286.1">
    <property type="nucleotide sequence ID" value="NC_002662.1"/>
</dbReference>
<dbReference type="SMR" id="Q9CE02"/>
<dbReference type="PaxDb" id="272623-L117074"/>
<dbReference type="EnsemblBacteria" id="AAK06146">
    <property type="protein sequence ID" value="AAK06146"/>
    <property type="gene ID" value="L117074"/>
</dbReference>
<dbReference type="KEGG" id="lla:L117074"/>
<dbReference type="PATRIC" id="fig|272623.7.peg.2205"/>
<dbReference type="eggNOG" id="COG0580">
    <property type="taxonomic scope" value="Bacteria"/>
</dbReference>
<dbReference type="HOGENOM" id="CLU_020019_9_2_9"/>
<dbReference type="OrthoDB" id="9807293at2"/>
<dbReference type="Proteomes" id="UP000002196">
    <property type="component" value="Chromosome"/>
</dbReference>
<dbReference type="GO" id="GO:0005886">
    <property type="term" value="C:plasma membrane"/>
    <property type="evidence" value="ECO:0007669"/>
    <property type="project" value="UniProtKB-SubCell"/>
</dbReference>
<dbReference type="GO" id="GO:0015254">
    <property type="term" value="F:glycerol channel activity"/>
    <property type="evidence" value="ECO:0007669"/>
    <property type="project" value="TreeGrafter"/>
</dbReference>
<dbReference type="GO" id="GO:0006071">
    <property type="term" value="P:glycerol metabolic process"/>
    <property type="evidence" value="ECO:0007669"/>
    <property type="project" value="UniProtKB-KW"/>
</dbReference>
<dbReference type="CDD" id="cd00333">
    <property type="entry name" value="MIP"/>
    <property type="match status" value="1"/>
</dbReference>
<dbReference type="Gene3D" id="1.20.1080.10">
    <property type="entry name" value="Glycerol uptake facilitator protein"/>
    <property type="match status" value="1"/>
</dbReference>
<dbReference type="InterPro" id="IPR023271">
    <property type="entry name" value="Aquaporin-like"/>
</dbReference>
<dbReference type="InterPro" id="IPR054631">
    <property type="entry name" value="Gla"/>
</dbReference>
<dbReference type="InterPro" id="IPR000425">
    <property type="entry name" value="MIP"/>
</dbReference>
<dbReference type="InterPro" id="IPR050363">
    <property type="entry name" value="MIP/Aquaporin"/>
</dbReference>
<dbReference type="InterPro" id="IPR022357">
    <property type="entry name" value="MIP_CS"/>
</dbReference>
<dbReference type="NCBIfam" id="NF045553">
    <property type="entry name" value="AquGlycerPorinGla"/>
    <property type="match status" value="1"/>
</dbReference>
<dbReference type="PANTHER" id="PTHR43829">
    <property type="entry name" value="AQUAPORIN OR AQUAGLYCEROPORIN RELATED"/>
    <property type="match status" value="1"/>
</dbReference>
<dbReference type="PANTHER" id="PTHR43829:SF9">
    <property type="entry name" value="AQUAPORIN-9"/>
    <property type="match status" value="1"/>
</dbReference>
<dbReference type="Pfam" id="PF00230">
    <property type="entry name" value="MIP"/>
    <property type="match status" value="2"/>
</dbReference>
<dbReference type="PRINTS" id="PR00783">
    <property type="entry name" value="MINTRINSICP"/>
</dbReference>
<dbReference type="SUPFAM" id="SSF81338">
    <property type="entry name" value="Aquaporin-like"/>
    <property type="match status" value="1"/>
</dbReference>
<dbReference type="PROSITE" id="PS00221">
    <property type="entry name" value="MIP"/>
    <property type="match status" value="1"/>
</dbReference>
<name>GLA_LACLA</name>
<proteinExistence type="inferred from homology"/>
<reference key="1">
    <citation type="journal article" date="2001" name="Genome Res.">
        <title>The complete genome sequence of the lactic acid bacterium Lactococcus lactis ssp. lactis IL1403.</title>
        <authorList>
            <person name="Bolotin A."/>
            <person name="Wincker P."/>
            <person name="Mauger S."/>
            <person name="Jaillon O."/>
            <person name="Malarme K."/>
            <person name="Weissenbach J."/>
            <person name="Ehrlich S.D."/>
            <person name="Sorokin A."/>
        </authorList>
    </citation>
    <scope>NUCLEOTIDE SEQUENCE [LARGE SCALE GENOMIC DNA]</scope>
    <source>
        <strain>IL1403</strain>
    </source>
</reference>
<feature type="chain" id="PRO_0000064093" description="Glycerol facilitator-aquaporin gla">
    <location>
        <begin position="1"/>
        <end position="289"/>
    </location>
</feature>
<feature type="transmembrane region" description="Helical" evidence="2">
    <location>
        <begin position="10"/>
        <end position="30"/>
    </location>
</feature>
<feature type="transmembrane region" description="Helical" evidence="2">
    <location>
        <begin position="41"/>
        <end position="61"/>
    </location>
</feature>
<feature type="transmembrane region" description="Helical" evidence="2">
    <location>
        <begin position="87"/>
        <end position="107"/>
    </location>
</feature>
<feature type="transmembrane region" description="Helical" evidence="2">
    <location>
        <begin position="151"/>
        <end position="171"/>
    </location>
</feature>
<feature type="transmembrane region" description="Helical" evidence="2">
    <location>
        <begin position="209"/>
        <end position="229"/>
    </location>
</feature>
<feature type="transmembrane region" description="Helical" evidence="2">
    <location>
        <begin position="264"/>
        <end position="284"/>
    </location>
</feature>
<feature type="short sequence motif" description="NPA 1">
    <location>
        <begin position="68"/>
        <end position="70"/>
    </location>
</feature>
<feature type="short sequence motif" description="NPA 2">
    <location>
        <begin position="235"/>
        <end position="237"/>
    </location>
</feature>
<protein>
    <recommendedName>
        <fullName>Glycerol facilitator-aquaporin gla</fullName>
    </recommendedName>
    <alternativeName>
        <fullName>Aquaglyceroporin</fullName>
    </alternativeName>
    <alternativeName>
        <fullName>Glyceroaquaporin</fullName>
    </alternativeName>
</protein>
<keyword id="KW-1003">Cell membrane</keyword>
<keyword id="KW-0319">Glycerol metabolism</keyword>
<keyword id="KW-0472">Membrane</keyword>
<keyword id="KW-1185">Reference proteome</keyword>
<keyword id="KW-0677">Repeat</keyword>
<keyword id="KW-0812">Transmembrane</keyword>
<keyword id="KW-1133">Transmembrane helix</keyword>
<keyword id="KW-0813">Transport</keyword>
<organism>
    <name type="scientific">Lactococcus lactis subsp. lactis (strain IL1403)</name>
    <name type="common">Streptococcus lactis</name>
    <dbReference type="NCBI Taxonomy" id="272623"/>
    <lineage>
        <taxon>Bacteria</taxon>
        <taxon>Bacillati</taxon>
        <taxon>Bacillota</taxon>
        <taxon>Bacilli</taxon>
        <taxon>Lactobacillales</taxon>
        <taxon>Streptococcaceae</taxon>
        <taxon>Lactococcus</taxon>
    </lineage>
</organism>
<sequence>MDVTWTVKYITEFVGTALLIIMGNGAVANVELKGTKAHAQSWMIIGWGYGLGVMLPAVAFGNITSQINPAFTLGLAASGLFPWAHVAQYIIAQVLGAMFGQLLIVMVYRPYYLKTQNPNAILGTFSTIDNVDDNDKKTRLGATINGFLNEFVGSFVLFFGAVAATNIFFGSQSITWMTNYLKGQGADVSSSDIMNQIWVQASGASASKMVAHLFLGFLVMGLVVALGGPTGPGLNPARDFGPRLVHSLLPKSVLGEAKGSSKWWYAWVPVLAPILASLAAVALFKMIYL</sequence>
<gene>
    <name type="primary">gla</name>
    <name type="ordered locus">LL2048</name>
    <name type="ORF">L117074</name>
</gene>
<comment type="function">
    <text evidence="1">Mixed channel protein that transports both water and glycerol.</text>
</comment>
<comment type="subcellular location">
    <subcellularLocation>
        <location evidence="3">Cell membrane</location>
        <topology evidence="3">Multi-pass membrane protein</topology>
    </subcellularLocation>
</comment>
<comment type="domain">
    <text>Aquaporins contain two tandem repeats each containing three membrane-spanning domains and a pore-forming loop with the signature motif Asn-Pro-Ala (NPA).</text>
</comment>
<comment type="similarity">
    <text evidence="3">Belongs to the MIP/aquaporin (TC 1.A.8) family.</text>
</comment>
<evidence type="ECO:0000250" key="1"/>
<evidence type="ECO:0000255" key="2"/>
<evidence type="ECO:0000305" key="3"/>